<proteinExistence type="inferred from homology"/>
<organism>
    <name type="scientific">Chlamydia muridarum (strain MoPn / Nigg)</name>
    <dbReference type="NCBI Taxonomy" id="243161"/>
    <lineage>
        <taxon>Bacteria</taxon>
        <taxon>Pseudomonadati</taxon>
        <taxon>Chlamydiota</taxon>
        <taxon>Chlamydiia</taxon>
        <taxon>Chlamydiales</taxon>
        <taxon>Chlamydiaceae</taxon>
        <taxon>Chlamydia/Chlamydophila group</taxon>
        <taxon>Chlamydia</taxon>
    </lineage>
</organism>
<sequence>MGKGILSLQQEMPLEYIGKSYQEVLKIRQESYWKRMRSFSLFEVIMHWTASLNQHTCRSYRGSFLALEKIGLLSLDMNLQEFSLLNHNLILDAIKKIPSSKASWTEGTKQVRAASYISLTRFLNRMTQGIVSIAQPSKQENSRTFFKTREIVKTNAMNRLQTASFLKELKKINPRDWLIAQTMLQGGKRSSEVLSLEIDQICFQQATISFSQLKNRQTEKRIIITYPQKFMHALREYIGPRRGLVFVTSSGKMVGLRQIARTFSQAGLQASIPFKITPHVLRATAVTEYKRLGCSDSDIMKVTGHTTAKMVFAYDKSSREDNASKKMALI</sequence>
<feature type="chain" id="PRO_0000197564" description="Virulence plasmid integrase pGP8-D">
    <location>
        <begin position="1"/>
        <end position="330"/>
    </location>
</feature>
<feature type="domain" description="Core-binding (CB)" evidence="2">
    <location>
        <begin position="39"/>
        <end position="124"/>
    </location>
</feature>
<feature type="domain" description="Tyr recombinase" evidence="1">
    <location>
        <begin position="152"/>
        <end position="327"/>
    </location>
</feature>
<feature type="active site" evidence="1">
    <location>
        <position position="189"/>
    </location>
</feature>
<feature type="active site" evidence="1">
    <location>
        <position position="214"/>
    </location>
</feature>
<feature type="active site" evidence="1">
    <location>
        <position position="279"/>
    </location>
</feature>
<feature type="active site" evidence="1">
    <location>
        <position position="282"/>
    </location>
</feature>
<feature type="active site" evidence="1">
    <location>
        <position position="305"/>
    </location>
</feature>
<feature type="active site" description="O-(3'-phospho-DNA)-tyrosine intermediate" evidence="1">
    <location>
        <position position="314"/>
    </location>
</feature>
<evidence type="ECO:0000255" key="1">
    <source>
        <dbReference type="PROSITE-ProRule" id="PRU01246"/>
    </source>
</evidence>
<evidence type="ECO:0000255" key="2">
    <source>
        <dbReference type="PROSITE-ProRule" id="PRU01248"/>
    </source>
</evidence>
<evidence type="ECO:0000305" key="3"/>
<comment type="similarity">
    <text evidence="3">Belongs to the 'phage' integrase family.</text>
</comment>
<comment type="sequence caution" evidence="3">
    <conflict type="erroneous initiation">
        <sequence resource="EMBL-CDS" id="AAF39714"/>
    </conflict>
</comment>
<gene>
    <name type="ordered locus">TC_A02</name>
</gene>
<geneLocation type="plasmid">
    <name>pMoPn</name>
</geneLocation>
<keyword id="KW-0229">DNA integration</keyword>
<keyword id="KW-0233">DNA recombination</keyword>
<keyword id="KW-0238">DNA-binding</keyword>
<keyword id="KW-0614">Plasmid</keyword>
<keyword id="KW-1179">Viral genome integration</keyword>
<keyword id="KW-1160">Virus entry into host cell</keyword>
<name>GP8D_CHLMU</name>
<dbReference type="EMBL" id="X78726">
    <property type="protein sequence ID" value="CAA55373.1"/>
    <property type="molecule type" value="Genomic_DNA"/>
</dbReference>
<dbReference type="EMBL" id="AE002162">
    <property type="protein sequence ID" value="AAF39714.1"/>
    <property type="status" value="ALT_INIT"/>
    <property type="molecule type" value="Genomic_DNA"/>
</dbReference>
<dbReference type="PIR" id="S44160">
    <property type="entry name" value="S44160"/>
</dbReference>
<dbReference type="RefSeq" id="WP_010231981.1">
    <property type="nucleotide sequence ID" value="NZ_ACOV01000005.1"/>
</dbReference>
<dbReference type="SMR" id="Q46436"/>
<dbReference type="GeneID" id="1245521"/>
<dbReference type="KEGG" id="cmu:TC_A02"/>
<dbReference type="PATRIC" id="fig|243161.6.peg.2"/>
<dbReference type="eggNOG" id="COG0582">
    <property type="taxonomic scope" value="Bacteria"/>
</dbReference>
<dbReference type="HOGENOM" id="CLU_078727_0_0_0"/>
<dbReference type="OrthoDB" id="17343at2"/>
<dbReference type="Proteomes" id="UP000000800">
    <property type="component" value="Plasmid pMoPn"/>
</dbReference>
<dbReference type="GO" id="GO:0003677">
    <property type="term" value="F:DNA binding"/>
    <property type="evidence" value="ECO:0007669"/>
    <property type="project" value="UniProtKB-KW"/>
</dbReference>
<dbReference type="GO" id="GO:0015074">
    <property type="term" value="P:DNA integration"/>
    <property type="evidence" value="ECO:0007669"/>
    <property type="project" value="UniProtKB-KW"/>
</dbReference>
<dbReference type="GO" id="GO:0006310">
    <property type="term" value="P:DNA recombination"/>
    <property type="evidence" value="ECO:0007669"/>
    <property type="project" value="UniProtKB-KW"/>
</dbReference>
<dbReference type="GO" id="GO:0075713">
    <property type="term" value="P:establishment of integrated proviral latency"/>
    <property type="evidence" value="ECO:0007669"/>
    <property type="project" value="UniProtKB-KW"/>
</dbReference>
<dbReference type="GO" id="GO:0046718">
    <property type="term" value="P:symbiont entry into host cell"/>
    <property type="evidence" value="ECO:0007669"/>
    <property type="project" value="UniProtKB-KW"/>
</dbReference>
<dbReference type="GO" id="GO:0044826">
    <property type="term" value="P:viral genome integration into host DNA"/>
    <property type="evidence" value="ECO:0007669"/>
    <property type="project" value="UniProtKB-KW"/>
</dbReference>
<dbReference type="CDD" id="cd00397">
    <property type="entry name" value="DNA_BRE_C"/>
    <property type="match status" value="1"/>
</dbReference>
<dbReference type="Gene3D" id="1.10.443.10">
    <property type="entry name" value="Intergrase catalytic core"/>
    <property type="match status" value="1"/>
</dbReference>
<dbReference type="InterPro" id="IPR044068">
    <property type="entry name" value="CB"/>
</dbReference>
<dbReference type="InterPro" id="IPR011010">
    <property type="entry name" value="DNA_brk_join_enz"/>
</dbReference>
<dbReference type="InterPro" id="IPR013762">
    <property type="entry name" value="Integrase-like_cat_sf"/>
</dbReference>
<dbReference type="InterPro" id="IPR002104">
    <property type="entry name" value="Integrase_catalytic"/>
</dbReference>
<dbReference type="InterPro" id="IPR050090">
    <property type="entry name" value="Tyrosine_recombinase_XerCD"/>
</dbReference>
<dbReference type="PANTHER" id="PTHR30349:SF41">
    <property type="entry name" value="INTEGRASE_RECOMBINASE PROTEIN MJ0367-RELATED"/>
    <property type="match status" value="1"/>
</dbReference>
<dbReference type="PANTHER" id="PTHR30349">
    <property type="entry name" value="PHAGE INTEGRASE-RELATED"/>
    <property type="match status" value="1"/>
</dbReference>
<dbReference type="Pfam" id="PF00589">
    <property type="entry name" value="Phage_integrase"/>
    <property type="match status" value="1"/>
</dbReference>
<dbReference type="SUPFAM" id="SSF56349">
    <property type="entry name" value="DNA breaking-rejoining enzymes"/>
    <property type="match status" value="1"/>
</dbReference>
<dbReference type="PROSITE" id="PS51900">
    <property type="entry name" value="CB"/>
    <property type="match status" value="1"/>
</dbReference>
<dbReference type="PROSITE" id="PS51898">
    <property type="entry name" value="TYR_RECOMBINASE"/>
    <property type="match status" value="1"/>
</dbReference>
<reference key="1">
    <citation type="journal article" date="1997" name="Microbiology">
        <title>Plasmid diversity in Chlamydia.</title>
        <authorList>
            <person name="Thomas N.S."/>
            <person name="Lusher M."/>
            <person name="Storey C.C."/>
            <person name="Clarke I.N."/>
        </authorList>
    </citation>
    <scope>NUCLEOTIDE SEQUENCE [GENOMIC DNA]</scope>
    <source>
        <strain>MoPn / Nigg</strain>
    </source>
</reference>
<reference key="2">
    <citation type="journal article" date="2000" name="Nucleic Acids Res.">
        <title>Genome sequences of Chlamydia trachomatis MoPn and Chlamydia pneumoniae AR39.</title>
        <authorList>
            <person name="Read T.D."/>
            <person name="Brunham R.C."/>
            <person name="Shen C."/>
            <person name="Gill S.R."/>
            <person name="Heidelberg J.F."/>
            <person name="White O."/>
            <person name="Hickey E.K."/>
            <person name="Peterson J.D."/>
            <person name="Utterback T.R."/>
            <person name="Berry K.J."/>
            <person name="Bass S."/>
            <person name="Linher K.D."/>
            <person name="Weidman J.F."/>
            <person name="Khouri H.M."/>
            <person name="Craven B."/>
            <person name="Bowman C."/>
            <person name="Dodson R.J."/>
            <person name="Gwinn M.L."/>
            <person name="Nelson W.C."/>
            <person name="DeBoy R.T."/>
            <person name="Kolonay J.F."/>
            <person name="McClarty G."/>
            <person name="Salzberg S.L."/>
            <person name="Eisen J.A."/>
            <person name="Fraser C.M."/>
        </authorList>
    </citation>
    <scope>NUCLEOTIDE SEQUENCE [LARGE SCALE GENOMIC DNA]</scope>
    <source>
        <strain>MoPn / Nigg</strain>
    </source>
</reference>
<protein>
    <recommendedName>
        <fullName>Virulence plasmid integrase pGP8-D</fullName>
    </recommendedName>
</protein>
<accession>Q46436</accession>
<accession>Q9PLU7</accession>